<evidence type="ECO:0000255" key="1">
    <source>
        <dbReference type="HAMAP-Rule" id="MF_00277"/>
    </source>
</evidence>
<evidence type="ECO:0000255" key="2">
    <source>
        <dbReference type="PROSITE-ProRule" id="PRU01175"/>
    </source>
</evidence>
<organism>
    <name type="scientific">Novosphingobium aromaticivorans (strain ATCC 700278 / DSM 12444 / CCUG 56034 / CIP 105152 / NBRC 16084 / F199)</name>
    <dbReference type="NCBI Taxonomy" id="279238"/>
    <lineage>
        <taxon>Bacteria</taxon>
        <taxon>Pseudomonadati</taxon>
        <taxon>Pseudomonadota</taxon>
        <taxon>Alphaproteobacteria</taxon>
        <taxon>Sphingomonadales</taxon>
        <taxon>Sphingomonadaceae</taxon>
        <taxon>Novosphingobium</taxon>
    </lineage>
</organism>
<proteinExistence type="inferred from homology"/>
<sequence>MLPRIANQRAIVDRRALADAVSAAFAEQGDRSRPAVVELLRGALDSGRAELARRLEARPSAGTECAHGQAFLVDQLVRVIHDHVVGKVYRASNRSTGERIAIIAVGGYGRGEMAPHSDVDIAFVTPIKPTSWCEQVIEAILYFLWDLGLKVGHSSRSLDEVVRMAKSDLTIRTALLEGRYVWGDRDLFDAASARFWNEVVNGTEKQFVAEKLQERNERHKRLGDSRYVVEPNVKEGKGGLRDLHTLYWIGKYIHKVRDASELVDVGLLTAEEYRAFRRAENFFWAVRCHLHAITRRAEDRLTFDLQREVAMRMNFADRPGKSAVERFMQYFFLQAKQVGSLTGVFLAQLDGQFARQKRSFFASLRSRRKKVGPFFIEGGKLGVPAEDTFQQDPVRLVELFAVAASEKVEIHPEAMRLARRDAGLIDAAVRKDQRANALFLDVLTSRNDPETVLRWMNEAGVFGRFVPDFGRVVAQMQFDMYHHYTVDEHTIRAIGLLASIEKGEAKADHPLASEVVGKVASRRVLYVATLLHDIAKGRRGDHSVLGAEVAMKLCPRLGLSAAETELVAWLVRWHLLMSATAFKRDLADYKTIADFVNTVQSQERLRLLLLLTIVDIRAVGPGVWNSWKRQLLGDLFVSAEEVLRLGHKQHGRAERIIAKKKAVGAILKERDNLIGTVGRQLGDAYWIAEPEDIIALNLQQMDQALGELLSVEAHWYPARGATLVTVLAADHPGLFYRIAGGIHLAGGNIIDARIHTARNGTAVDNFLVQDPLGRPLNEASQIERLKNAIADALANRVKLVPQLAARPLARPRADAFDVRPIVIFDNKASNRFTVIEVGARDRPALLNRLARALFEARLIVHSAHIATYGERAVDTFYVTDVLGEKVDSEARMKAVEKRLLEAAEDRKVKDAA</sequence>
<dbReference type="EC" id="2.7.7.59" evidence="1"/>
<dbReference type="EC" id="3.1.4.-" evidence="1"/>
<dbReference type="EMBL" id="CP000248">
    <property type="protein sequence ID" value="ABD25129.1"/>
    <property type="molecule type" value="Genomic_DNA"/>
</dbReference>
<dbReference type="SMR" id="Q2GAJ4"/>
<dbReference type="STRING" id="279238.Saro_0682"/>
<dbReference type="KEGG" id="nar:Saro_0682"/>
<dbReference type="eggNOG" id="COG2844">
    <property type="taxonomic scope" value="Bacteria"/>
</dbReference>
<dbReference type="HOGENOM" id="CLU_012833_1_0_5"/>
<dbReference type="Proteomes" id="UP000009134">
    <property type="component" value="Chromosome"/>
</dbReference>
<dbReference type="GO" id="GO:0008773">
    <property type="term" value="F:[protein-PII] uridylyltransferase activity"/>
    <property type="evidence" value="ECO:0007669"/>
    <property type="project" value="UniProtKB-UniRule"/>
</dbReference>
<dbReference type="GO" id="GO:0008081">
    <property type="term" value="F:phosphoric diester hydrolase activity"/>
    <property type="evidence" value="ECO:0007669"/>
    <property type="project" value="UniProtKB-UniRule"/>
</dbReference>
<dbReference type="GO" id="GO:0006808">
    <property type="term" value="P:regulation of nitrogen utilization"/>
    <property type="evidence" value="ECO:0007669"/>
    <property type="project" value="UniProtKB-UniRule"/>
</dbReference>
<dbReference type="CDD" id="cd04899">
    <property type="entry name" value="ACT_ACR-UUR-like_2"/>
    <property type="match status" value="1"/>
</dbReference>
<dbReference type="CDD" id="cd04900">
    <property type="entry name" value="ACT_UUR-like_1"/>
    <property type="match status" value="1"/>
</dbReference>
<dbReference type="CDD" id="cd00077">
    <property type="entry name" value="HDc"/>
    <property type="match status" value="1"/>
</dbReference>
<dbReference type="CDD" id="cd05401">
    <property type="entry name" value="NT_GlnE_GlnD_like"/>
    <property type="match status" value="1"/>
</dbReference>
<dbReference type="Gene3D" id="3.30.70.260">
    <property type="match status" value="1"/>
</dbReference>
<dbReference type="Gene3D" id="3.30.460.10">
    <property type="entry name" value="Beta Polymerase, domain 2"/>
    <property type="match status" value="1"/>
</dbReference>
<dbReference type="Gene3D" id="1.10.3090.10">
    <property type="entry name" value="cca-adding enzyme, domain 2"/>
    <property type="match status" value="1"/>
</dbReference>
<dbReference type="HAMAP" id="MF_00277">
    <property type="entry name" value="PII_uridylyl_transf"/>
    <property type="match status" value="1"/>
</dbReference>
<dbReference type="InterPro" id="IPR045865">
    <property type="entry name" value="ACT-like_dom_sf"/>
</dbReference>
<dbReference type="InterPro" id="IPR002912">
    <property type="entry name" value="ACT_dom"/>
</dbReference>
<dbReference type="InterPro" id="IPR003607">
    <property type="entry name" value="HD/PDEase_dom"/>
</dbReference>
<dbReference type="InterPro" id="IPR006674">
    <property type="entry name" value="HD_domain"/>
</dbReference>
<dbReference type="InterPro" id="IPR043519">
    <property type="entry name" value="NT_sf"/>
</dbReference>
<dbReference type="InterPro" id="IPR013546">
    <property type="entry name" value="PII_UdlTrfase/GS_AdlTrfase"/>
</dbReference>
<dbReference type="InterPro" id="IPR002934">
    <property type="entry name" value="Polymerase_NTP_transf_dom"/>
</dbReference>
<dbReference type="InterPro" id="IPR010043">
    <property type="entry name" value="UTase/UR"/>
</dbReference>
<dbReference type="NCBIfam" id="NF003467">
    <property type="entry name" value="PRK05092.1"/>
    <property type="match status" value="1"/>
</dbReference>
<dbReference type="NCBIfam" id="TIGR01693">
    <property type="entry name" value="UTase_glnD"/>
    <property type="match status" value="1"/>
</dbReference>
<dbReference type="PANTHER" id="PTHR47320">
    <property type="entry name" value="BIFUNCTIONAL URIDYLYLTRANSFERASE/URIDYLYL-REMOVING ENZYME"/>
    <property type="match status" value="1"/>
</dbReference>
<dbReference type="PANTHER" id="PTHR47320:SF1">
    <property type="entry name" value="BIFUNCTIONAL URIDYLYLTRANSFERASE_URIDYLYL-REMOVING ENZYME"/>
    <property type="match status" value="1"/>
</dbReference>
<dbReference type="Pfam" id="PF08335">
    <property type="entry name" value="GlnD_UR_UTase"/>
    <property type="match status" value="1"/>
</dbReference>
<dbReference type="Pfam" id="PF01966">
    <property type="entry name" value="HD"/>
    <property type="match status" value="1"/>
</dbReference>
<dbReference type="Pfam" id="PF01909">
    <property type="entry name" value="NTP_transf_2"/>
    <property type="match status" value="1"/>
</dbReference>
<dbReference type="PIRSF" id="PIRSF006288">
    <property type="entry name" value="PII_uridyltransf"/>
    <property type="match status" value="1"/>
</dbReference>
<dbReference type="SMART" id="SM00471">
    <property type="entry name" value="HDc"/>
    <property type="match status" value="1"/>
</dbReference>
<dbReference type="SUPFAM" id="SSF55021">
    <property type="entry name" value="ACT-like"/>
    <property type="match status" value="2"/>
</dbReference>
<dbReference type="SUPFAM" id="SSF81301">
    <property type="entry name" value="Nucleotidyltransferase"/>
    <property type="match status" value="1"/>
</dbReference>
<dbReference type="SUPFAM" id="SSF81593">
    <property type="entry name" value="Nucleotidyltransferase substrate binding subunit/domain"/>
    <property type="match status" value="1"/>
</dbReference>
<dbReference type="SUPFAM" id="SSF81891">
    <property type="entry name" value="Poly A polymerase C-terminal region-like"/>
    <property type="match status" value="1"/>
</dbReference>
<dbReference type="PROSITE" id="PS51671">
    <property type="entry name" value="ACT"/>
    <property type="match status" value="2"/>
</dbReference>
<dbReference type="PROSITE" id="PS51831">
    <property type="entry name" value="HD"/>
    <property type="match status" value="1"/>
</dbReference>
<feature type="chain" id="PRO_1000078807" description="Bifunctional uridylyltransferase/uridylyl-removing enzyme">
    <location>
        <begin position="1"/>
        <end position="912"/>
    </location>
</feature>
<feature type="domain" description="HD" evidence="2">
    <location>
        <begin position="486"/>
        <end position="608"/>
    </location>
</feature>
<feature type="domain" description="ACT 1" evidence="1">
    <location>
        <begin position="723"/>
        <end position="802"/>
    </location>
</feature>
<feature type="domain" description="ACT 2" evidence="1">
    <location>
        <begin position="834"/>
        <end position="912"/>
    </location>
</feature>
<feature type="region of interest" description="Uridylyltransferase">
    <location>
        <begin position="1"/>
        <end position="369"/>
    </location>
</feature>
<feature type="region of interest" description="Uridylyl-removing">
    <location>
        <begin position="370"/>
        <end position="722"/>
    </location>
</feature>
<name>GLND_NOVAD</name>
<accession>Q2GAJ4</accession>
<keyword id="KW-0378">Hydrolase</keyword>
<keyword id="KW-0460">Magnesium</keyword>
<keyword id="KW-0511">Multifunctional enzyme</keyword>
<keyword id="KW-0548">Nucleotidyltransferase</keyword>
<keyword id="KW-1185">Reference proteome</keyword>
<keyword id="KW-0677">Repeat</keyword>
<keyword id="KW-0808">Transferase</keyword>
<protein>
    <recommendedName>
        <fullName evidence="1">Bifunctional uridylyltransferase/uridylyl-removing enzyme</fullName>
        <shortName evidence="1">UTase/UR</shortName>
    </recommendedName>
    <alternativeName>
        <fullName evidence="1">Bifunctional [protein-PII] modification enzyme</fullName>
    </alternativeName>
    <alternativeName>
        <fullName evidence="1">Bifunctional nitrogen sensor protein</fullName>
    </alternativeName>
    <domain>
        <recommendedName>
            <fullName evidence="1">[Protein-PII] uridylyltransferase</fullName>
            <shortName evidence="1">PII uridylyltransferase</shortName>
            <shortName evidence="1">UTase</shortName>
            <ecNumber evidence="1">2.7.7.59</ecNumber>
        </recommendedName>
    </domain>
    <domain>
        <recommendedName>
            <fullName evidence="1">[Protein-PII]-UMP uridylyl-removing enzyme</fullName>
            <shortName evidence="1">UR</shortName>
            <ecNumber evidence="1">3.1.4.-</ecNumber>
        </recommendedName>
    </domain>
</protein>
<reference key="1">
    <citation type="submission" date="2006-01" db="EMBL/GenBank/DDBJ databases">
        <title>Complete sequence of Novosphingobium aromaticivorans DSM 12444.</title>
        <authorList>
            <consortium name="US DOE Joint Genome Institute"/>
            <person name="Copeland A."/>
            <person name="Lucas S."/>
            <person name="Lapidus A."/>
            <person name="Barry K."/>
            <person name="Detter J.C."/>
            <person name="Glavina T."/>
            <person name="Hammon N."/>
            <person name="Israni S."/>
            <person name="Pitluck S."/>
            <person name="Chain P."/>
            <person name="Malfatti S."/>
            <person name="Shin M."/>
            <person name="Vergez L."/>
            <person name="Schmutz J."/>
            <person name="Larimer F."/>
            <person name="Land M."/>
            <person name="Kyrpides N."/>
            <person name="Ivanova N."/>
            <person name="Fredrickson J."/>
            <person name="Balkwill D."/>
            <person name="Romine M.F."/>
            <person name="Richardson P."/>
        </authorList>
    </citation>
    <scope>NUCLEOTIDE SEQUENCE [LARGE SCALE GENOMIC DNA]</scope>
    <source>
        <strain>ATCC 700278 / DSM 12444 / CCUG 56034 / CIP 105152 / NBRC 16084 / F199</strain>
    </source>
</reference>
<comment type="function">
    <text evidence="1">Modifies, by uridylylation and deuridylylation, the PII regulatory proteins (GlnB and homologs), in response to the nitrogen status of the cell that GlnD senses through the glutamine level. Under low glutamine levels, catalyzes the conversion of the PII proteins and UTP to PII-UMP and PPi, while under higher glutamine levels, GlnD hydrolyzes PII-UMP to PII and UMP (deuridylylation). Thus, controls uridylylation state and activity of the PII proteins, and plays an important role in the regulation of nitrogen assimilation and metabolism.</text>
</comment>
<comment type="catalytic activity">
    <reaction evidence="1">
        <text>[protein-PII]-L-tyrosine + UTP = [protein-PII]-uridylyl-L-tyrosine + diphosphate</text>
        <dbReference type="Rhea" id="RHEA:13673"/>
        <dbReference type="Rhea" id="RHEA-COMP:12147"/>
        <dbReference type="Rhea" id="RHEA-COMP:12148"/>
        <dbReference type="ChEBI" id="CHEBI:33019"/>
        <dbReference type="ChEBI" id="CHEBI:46398"/>
        <dbReference type="ChEBI" id="CHEBI:46858"/>
        <dbReference type="ChEBI" id="CHEBI:90602"/>
        <dbReference type="EC" id="2.7.7.59"/>
    </reaction>
</comment>
<comment type="catalytic activity">
    <reaction evidence="1">
        <text>[protein-PII]-uridylyl-L-tyrosine + H2O = [protein-PII]-L-tyrosine + UMP + H(+)</text>
        <dbReference type="Rhea" id="RHEA:48600"/>
        <dbReference type="Rhea" id="RHEA-COMP:12147"/>
        <dbReference type="Rhea" id="RHEA-COMP:12148"/>
        <dbReference type="ChEBI" id="CHEBI:15377"/>
        <dbReference type="ChEBI" id="CHEBI:15378"/>
        <dbReference type="ChEBI" id="CHEBI:46858"/>
        <dbReference type="ChEBI" id="CHEBI:57865"/>
        <dbReference type="ChEBI" id="CHEBI:90602"/>
    </reaction>
</comment>
<comment type="cofactor">
    <cofactor evidence="1">
        <name>Mg(2+)</name>
        <dbReference type="ChEBI" id="CHEBI:18420"/>
    </cofactor>
</comment>
<comment type="activity regulation">
    <text evidence="1">Uridylyltransferase (UTase) activity is inhibited by glutamine, while glutamine activates uridylyl-removing (UR) activity.</text>
</comment>
<comment type="domain">
    <text evidence="1">Has four distinct domains: an N-terminal nucleotidyltransferase (NT) domain responsible for UTase activity, a central HD domain that encodes UR activity, and two C-terminal ACT domains that seem to have a role in glutamine sensing.</text>
</comment>
<comment type="similarity">
    <text evidence="1">Belongs to the GlnD family.</text>
</comment>
<gene>
    <name evidence="1" type="primary">glnD</name>
    <name type="ordered locus">Saro_0682</name>
</gene>